<evidence type="ECO:0000255" key="1">
    <source>
        <dbReference type="HAMAP-Rule" id="MF_01185"/>
    </source>
</evidence>
<gene>
    <name evidence="1" type="primary">fliW</name>
    <name type="ordered locus">EUBELI_00235</name>
</gene>
<name>FLIW_LACE2</name>
<organism>
    <name type="scientific">Lachnospira eligens (strain ATCC 27750 / DSM 3376 / VPI C15-48 / C15-B4)</name>
    <name type="common">Eubacterium eligens</name>
    <dbReference type="NCBI Taxonomy" id="515620"/>
    <lineage>
        <taxon>Bacteria</taxon>
        <taxon>Bacillati</taxon>
        <taxon>Bacillota</taxon>
        <taxon>Clostridia</taxon>
        <taxon>Lachnospirales</taxon>
        <taxon>Lachnospiraceae</taxon>
        <taxon>Lachnospira</taxon>
    </lineage>
</organism>
<reference key="1">
    <citation type="journal article" date="2009" name="Proc. Natl. Acad. Sci. U.S.A.">
        <title>Characterizing a model human gut microbiota composed of members of its two dominant bacterial phyla.</title>
        <authorList>
            <person name="Mahowald M.A."/>
            <person name="Rey F.E."/>
            <person name="Seedorf H."/>
            <person name="Turnbaugh P.J."/>
            <person name="Fulton R.S."/>
            <person name="Wollam A."/>
            <person name="Shah N."/>
            <person name="Wang C."/>
            <person name="Magrini V."/>
            <person name="Wilson R.K."/>
            <person name="Cantarel B.L."/>
            <person name="Coutinho P.M."/>
            <person name="Henrissat B."/>
            <person name="Crock L.W."/>
            <person name="Russell A."/>
            <person name="Verberkmoes N.C."/>
            <person name="Hettich R.L."/>
            <person name="Gordon J.I."/>
        </authorList>
    </citation>
    <scope>NUCLEOTIDE SEQUENCE [LARGE SCALE GENOMIC DNA]</scope>
    <source>
        <strain>ATCC 27750 / DSM 3376 / VPI C15-48 / C15-B4</strain>
    </source>
</reference>
<sequence>MKVQTKWFGEIEVSEDKIITFDKGIIGFEDWKKYTLVYDAEKEENISIIWLQAIDEPTLALPVMKPEFVFETYDPVVEDELLKALGDDIQDDNIRVYCALTVPRDITKMTINLKAPIIVDFDTMKGIQLIADNSEYQVRYPIYDILKKEEN</sequence>
<comment type="function">
    <text evidence="1">Acts as an anti-CsrA protein, binds CsrA and prevents it from repressing translation of its target genes, one of which is flagellin. Binds to flagellin and participates in the assembly of the flagellum.</text>
</comment>
<comment type="subunit">
    <text evidence="1">Interacts with translational regulator CsrA and flagellin(s).</text>
</comment>
<comment type="subcellular location">
    <subcellularLocation>
        <location evidence="1">Cytoplasm</location>
    </subcellularLocation>
</comment>
<comment type="similarity">
    <text evidence="1">Belongs to the FliW family.</text>
</comment>
<keyword id="KW-1005">Bacterial flagellum biogenesis</keyword>
<keyword id="KW-0143">Chaperone</keyword>
<keyword id="KW-0963">Cytoplasm</keyword>
<keyword id="KW-1185">Reference proteome</keyword>
<keyword id="KW-0810">Translation regulation</keyword>
<feature type="chain" id="PRO_1000213775" description="Flagellar assembly factor FliW">
    <location>
        <begin position="1"/>
        <end position="151"/>
    </location>
</feature>
<proteinExistence type="inferred from homology"/>
<dbReference type="EMBL" id="CP001104">
    <property type="protein sequence ID" value="ACR71271.1"/>
    <property type="molecule type" value="Genomic_DNA"/>
</dbReference>
<dbReference type="RefSeq" id="WP_012738508.1">
    <property type="nucleotide sequence ID" value="NC_012778.1"/>
</dbReference>
<dbReference type="SMR" id="C4Z281"/>
<dbReference type="STRING" id="515620.EUBELI_00235"/>
<dbReference type="GeneID" id="41355014"/>
<dbReference type="KEGG" id="eel:EUBELI_00235"/>
<dbReference type="eggNOG" id="COG1699">
    <property type="taxonomic scope" value="Bacteria"/>
</dbReference>
<dbReference type="HOGENOM" id="CLU_112356_0_0_9"/>
<dbReference type="Proteomes" id="UP000001476">
    <property type="component" value="Chromosome"/>
</dbReference>
<dbReference type="GO" id="GO:0005737">
    <property type="term" value="C:cytoplasm"/>
    <property type="evidence" value="ECO:0007669"/>
    <property type="project" value="UniProtKB-SubCell"/>
</dbReference>
<dbReference type="GO" id="GO:0044780">
    <property type="term" value="P:bacterial-type flagellum assembly"/>
    <property type="evidence" value="ECO:0007669"/>
    <property type="project" value="UniProtKB-UniRule"/>
</dbReference>
<dbReference type="GO" id="GO:0006417">
    <property type="term" value="P:regulation of translation"/>
    <property type="evidence" value="ECO:0007669"/>
    <property type="project" value="UniProtKB-KW"/>
</dbReference>
<dbReference type="Gene3D" id="2.30.290.10">
    <property type="entry name" value="BH3618-like"/>
    <property type="match status" value="1"/>
</dbReference>
<dbReference type="HAMAP" id="MF_01185">
    <property type="entry name" value="FliW"/>
    <property type="match status" value="1"/>
</dbReference>
<dbReference type="InterPro" id="IPR003775">
    <property type="entry name" value="Flagellar_assembly_factor_FliW"/>
</dbReference>
<dbReference type="InterPro" id="IPR024046">
    <property type="entry name" value="Flagellar_assmbl_FliW_dom_sf"/>
</dbReference>
<dbReference type="PANTHER" id="PTHR39190">
    <property type="entry name" value="FLAGELLAR ASSEMBLY FACTOR FLIW"/>
    <property type="match status" value="1"/>
</dbReference>
<dbReference type="PANTHER" id="PTHR39190:SF1">
    <property type="entry name" value="FLAGELLAR ASSEMBLY FACTOR FLIW"/>
    <property type="match status" value="1"/>
</dbReference>
<dbReference type="Pfam" id="PF02623">
    <property type="entry name" value="FliW"/>
    <property type="match status" value="1"/>
</dbReference>
<dbReference type="SUPFAM" id="SSF141457">
    <property type="entry name" value="BH3618-like"/>
    <property type="match status" value="1"/>
</dbReference>
<protein>
    <recommendedName>
        <fullName evidence="1">Flagellar assembly factor FliW</fullName>
    </recommendedName>
</protein>
<accession>C4Z281</accession>